<dbReference type="EMBL" id="M91275">
    <property type="protein sequence ID" value="AAA29133.1"/>
    <property type="molecule type" value="Genomic_DNA"/>
</dbReference>
<dbReference type="SMR" id="P28092"/>
<dbReference type="GlyCosmos" id="P28092">
    <property type="glycosylation" value="1 site, No reported glycans"/>
</dbReference>
<dbReference type="GO" id="GO:0005615">
    <property type="term" value="C:extracellular space"/>
    <property type="evidence" value="ECO:0007669"/>
    <property type="project" value="TreeGrafter"/>
</dbReference>
<dbReference type="GO" id="GO:0005125">
    <property type="term" value="F:cytokine activity"/>
    <property type="evidence" value="ECO:0007669"/>
    <property type="project" value="TreeGrafter"/>
</dbReference>
<dbReference type="GO" id="GO:0005109">
    <property type="term" value="F:frizzled binding"/>
    <property type="evidence" value="ECO:0007669"/>
    <property type="project" value="TreeGrafter"/>
</dbReference>
<dbReference type="GO" id="GO:0060070">
    <property type="term" value="P:canonical Wnt signaling pathway"/>
    <property type="evidence" value="ECO:0007669"/>
    <property type="project" value="TreeGrafter"/>
</dbReference>
<dbReference type="GO" id="GO:0045165">
    <property type="term" value="P:cell fate commitment"/>
    <property type="evidence" value="ECO:0007669"/>
    <property type="project" value="TreeGrafter"/>
</dbReference>
<dbReference type="GO" id="GO:0030182">
    <property type="term" value="P:neuron differentiation"/>
    <property type="evidence" value="ECO:0007669"/>
    <property type="project" value="TreeGrafter"/>
</dbReference>
<dbReference type="GO" id="GO:0046330">
    <property type="term" value="P:positive regulation of JNK cascade"/>
    <property type="evidence" value="ECO:0007669"/>
    <property type="project" value="TreeGrafter"/>
</dbReference>
<dbReference type="Gene3D" id="3.30.2460.20">
    <property type="match status" value="1"/>
</dbReference>
<dbReference type="InterPro" id="IPR005817">
    <property type="entry name" value="Wnt"/>
</dbReference>
<dbReference type="InterPro" id="IPR043158">
    <property type="entry name" value="Wnt_C"/>
</dbReference>
<dbReference type="PANTHER" id="PTHR12027:SF112">
    <property type="entry name" value="PROTEIN WNT-2"/>
    <property type="match status" value="1"/>
</dbReference>
<dbReference type="PANTHER" id="PTHR12027">
    <property type="entry name" value="WNT RELATED"/>
    <property type="match status" value="1"/>
</dbReference>
<dbReference type="Pfam" id="PF00110">
    <property type="entry name" value="wnt"/>
    <property type="match status" value="1"/>
</dbReference>
<dbReference type="SMART" id="SM00097">
    <property type="entry name" value="WNT1"/>
    <property type="match status" value="1"/>
</dbReference>
<feature type="chain" id="PRO_0000200643" description="Protein Wnt-7">
    <location>
        <begin position="1" status="less than"/>
        <end position="123" status="greater than"/>
    </location>
</feature>
<feature type="lipid moiety-binding region" description="O-palmitoleoyl serine; by PORCN" evidence="3">
    <location>
        <position position="1"/>
    </location>
</feature>
<feature type="glycosylation site" description="N-linked (GlcNAc...) asparagine" evidence="4">
    <location>
        <position position="90"/>
    </location>
</feature>
<feature type="disulfide bond" evidence="2">
    <location>
        <begin position="89"/>
        <end position="104"/>
    </location>
</feature>
<feature type="non-terminal residue">
    <location>
        <position position="1"/>
    </location>
</feature>
<feature type="non-terminal residue">
    <location>
        <position position="123"/>
    </location>
</feature>
<keyword id="KW-0217">Developmental protein</keyword>
<keyword id="KW-1015">Disulfide bond</keyword>
<keyword id="KW-0272">Extracellular matrix</keyword>
<keyword id="KW-0325">Glycoprotein</keyword>
<keyword id="KW-0449">Lipoprotein</keyword>
<keyword id="KW-0964">Secreted</keyword>
<keyword id="KW-0879">Wnt signaling pathway</keyword>
<comment type="function">
    <text>Ligand for members of the frizzled family of seven transmembrane receptors. Probable developmental protein. May be a signaling molecule which affects the development of discrete regions of tissues. Is likely to signal over only few cell diameters.</text>
</comment>
<comment type="subcellular location">
    <subcellularLocation>
        <location>Secreted</location>
        <location>Extracellular space</location>
        <location>Extracellular matrix</location>
    </subcellularLocation>
</comment>
<comment type="PTM">
    <text evidence="1 3">Palmitoleoylation is required for efficient binding to frizzled receptors. Depalmitoleoylation leads to Wnt signaling pathway inhibition.</text>
</comment>
<comment type="similarity">
    <text evidence="5">Belongs to the Wnt family.</text>
</comment>
<sequence length="123" mass="14254">SGSCTTKTCWTTLPPFRLVGNILKQKYEKPVQVEPVRARRTRRPAFLKIKDIKNFKKPRPTDMVYLQRSPNYCDRDPRVGSLGTVGRQCNRTSIGTDSCDLMCCGRGYNTHQYTRIWQCNCKF</sequence>
<accession>P28092</accession>
<evidence type="ECO:0000250" key="1">
    <source>
        <dbReference type="UniProtKB" id="P27467"/>
    </source>
</evidence>
<evidence type="ECO:0000250" key="2">
    <source>
        <dbReference type="UniProtKB" id="P28026"/>
    </source>
</evidence>
<evidence type="ECO:0000250" key="3">
    <source>
        <dbReference type="UniProtKB" id="P56704"/>
    </source>
</evidence>
<evidence type="ECO:0000255" key="4"/>
<evidence type="ECO:0000305" key="5"/>
<name>WNT7_EVATR</name>
<reference key="1">
    <citation type="journal article" date="1992" name="Proc. Natl. Acad. Sci. U.S.A.">
        <title>Diversification of the Wnt gene family on the ancestral lineage of vertebrates.</title>
        <authorList>
            <person name="Sidow A."/>
        </authorList>
    </citation>
    <scope>NUCLEOTIDE SEQUENCE [GENOMIC DNA]</scope>
</reference>
<protein>
    <recommendedName>
        <fullName>Protein Wnt-7</fullName>
    </recommendedName>
</protein>
<gene>
    <name type="primary">WNT-7</name>
</gene>
<organism>
    <name type="scientific">Evasterias troschelii</name>
    <name type="common">Mottled sea star</name>
    <name type="synonym">Asterias troschelii</name>
    <dbReference type="NCBI Taxonomy" id="7616"/>
    <lineage>
        <taxon>Eukaryota</taxon>
        <taxon>Metazoa</taxon>
        <taxon>Echinodermata</taxon>
        <taxon>Eleutherozoa</taxon>
        <taxon>Asterozoa</taxon>
        <taxon>Asteroidea</taxon>
        <taxon>Forcipulatacea</taxon>
        <taxon>Forcipulatida</taxon>
        <taxon>Asteriidae</taxon>
        <taxon>Evasterias</taxon>
    </lineage>
</organism>
<proteinExistence type="inferred from homology"/>